<accession>Q8NRD0</accession>
<organism>
    <name type="scientific">Corynebacterium glutamicum (strain ATCC 13032 / DSM 20300 / JCM 1318 / BCRC 11384 / CCUG 27702 / LMG 3730 / NBRC 12168 / NCIMB 10025 / NRRL B-2784 / 534)</name>
    <dbReference type="NCBI Taxonomy" id="196627"/>
    <lineage>
        <taxon>Bacteria</taxon>
        <taxon>Bacillati</taxon>
        <taxon>Actinomycetota</taxon>
        <taxon>Actinomycetes</taxon>
        <taxon>Mycobacteriales</taxon>
        <taxon>Corynebacteriaceae</taxon>
        <taxon>Corynebacterium</taxon>
    </lineage>
</organism>
<dbReference type="EMBL" id="BA000036">
    <property type="protein sequence ID" value="BAB98515.1"/>
    <property type="molecule type" value="Genomic_DNA"/>
</dbReference>
<dbReference type="EMBL" id="BX927151">
    <property type="protein sequence ID" value="CAF19828.1"/>
    <property type="molecule type" value="Genomic_DNA"/>
</dbReference>
<dbReference type="RefSeq" id="NP_600350.1">
    <property type="nucleotide sequence ID" value="NC_003450.3"/>
</dbReference>
<dbReference type="RefSeq" id="WP_003854998.1">
    <property type="nucleotide sequence ID" value="NC_006958.1"/>
</dbReference>
<dbReference type="SMR" id="Q8NRD0"/>
<dbReference type="STRING" id="196627.cg1273"/>
<dbReference type="GeneID" id="1019107"/>
<dbReference type="KEGG" id="cgb:cg1273"/>
<dbReference type="KEGG" id="cgl:Cgl1122"/>
<dbReference type="PATRIC" id="fig|196627.13.peg.1101"/>
<dbReference type="eggNOG" id="COG1826">
    <property type="taxonomic scope" value="Bacteria"/>
</dbReference>
<dbReference type="HOGENOM" id="CLU_086034_2_0_11"/>
<dbReference type="OrthoDB" id="3267321at2"/>
<dbReference type="BioCyc" id="CORYNE:G18NG-10694-MONOMER"/>
<dbReference type="Proteomes" id="UP000000582">
    <property type="component" value="Chromosome"/>
</dbReference>
<dbReference type="Proteomes" id="UP000001009">
    <property type="component" value="Chromosome"/>
</dbReference>
<dbReference type="GO" id="GO:0033281">
    <property type="term" value="C:TAT protein transport complex"/>
    <property type="evidence" value="ECO:0007669"/>
    <property type="project" value="UniProtKB-UniRule"/>
</dbReference>
<dbReference type="GO" id="GO:0008320">
    <property type="term" value="F:protein transmembrane transporter activity"/>
    <property type="evidence" value="ECO:0007669"/>
    <property type="project" value="UniProtKB-UniRule"/>
</dbReference>
<dbReference type="GO" id="GO:0043953">
    <property type="term" value="P:protein transport by the Tat complex"/>
    <property type="evidence" value="ECO:0007669"/>
    <property type="project" value="UniProtKB-UniRule"/>
</dbReference>
<dbReference type="Gene3D" id="1.20.5.3310">
    <property type="match status" value="1"/>
</dbReference>
<dbReference type="HAMAP" id="MF_00237">
    <property type="entry name" value="TatB"/>
    <property type="match status" value="1"/>
</dbReference>
<dbReference type="InterPro" id="IPR018448">
    <property type="entry name" value="TatB"/>
</dbReference>
<dbReference type="NCBIfam" id="NF001212">
    <property type="entry name" value="PRK00182.1"/>
    <property type="match status" value="1"/>
</dbReference>
<dbReference type="NCBIfam" id="TIGR01410">
    <property type="entry name" value="tatB"/>
    <property type="match status" value="1"/>
</dbReference>
<dbReference type="PRINTS" id="PR01506">
    <property type="entry name" value="TATBPROTEIN"/>
</dbReference>
<feature type="chain" id="PRO_0000192652" description="Sec-independent protein translocase protein TatB">
    <location>
        <begin position="1"/>
        <end position="156"/>
    </location>
</feature>
<feature type="transmembrane region" description="Helical" evidence="1">
    <location>
        <begin position="2"/>
        <end position="22"/>
    </location>
</feature>
<feature type="region of interest" description="Disordered" evidence="2">
    <location>
        <begin position="100"/>
        <end position="156"/>
    </location>
</feature>
<feature type="compositionally biased region" description="Polar residues" evidence="2">
    <location>
        <begin position="113"/>
        <end position="122"/>
    </location>
</feature>
<protein>
    <recommendedName>
        <fullName evidence="1">Sec-independent protein translocase protein TatB</fullName>
    </recommendedName>
</protein>
<comment type="function">
    <text evidence="1">Part of the twin-arginine translocation (Tat) system that transports large folded proteins containing a characteristic twin-arginine motif in their signal peptide across membranes. Together with TatC, TatB is part of a receptor directly interacting with Tat signal peptides. TatB may form an oligomeric binding site that transiently accommodates folded Tat precursor proteins before their translocation.</text>
</comment>
<comment type="subunit">
    <text evidence="1">The Tat system comprises two distinct complexes: a TatABC complex, containing multiple copies of TatA, TatB and TatC subunits, and a separate TatA complex, containing only TatA subunits. Substrates initially bind to the TatABC complex, which probably triggers association of the separate TatA complex to form the active translocon.</text>
</comment>
<comment type="subcellular location">
    <subcellularLocation>
        <location evidence="1">Cell membrane</location>
        <topology evidence="1">Single-pass membrane protein</topology>
    </subcellularLocation>
</comment>
<comment type="similarity">
    <text evidence="1">Belongs to the TatB family.</text>
</comment>
<keyword id="KW-1003">Cell membrane</keyword>
<keyword id="KW-0472">Membrane</keyword>
<keyword id="KW-0653">Protein transport</keyword>
<keyword id="KW-1185">Reference proteome</keyword>
<keyword id="KW-0811">Translocation</keyword>
<keyword id="KW-0812">Transmembrane</keyword>
<keyword id="KW-1133">Transmembrane helix</keyword>
<keyword id="KW-0813">Transport</keyword>
<name>TATB_CORGL</name>
<reference key="1">
    <citation type="journal article" date="2003" name="Appl. Microbiol. Biotechnol.">
        <title>The Corynebacterium glutamicum genome: features and impacts on biotechnological processes.</title>
        <authorList>
            <person name="Ikeda M."/>
            <person name="Nakagawa S."/>
        </authorList>
    </citation>
    <scope>NUCLEOTIDE SEQUENCE [LARGE SCALE GENOMIC DNA]</scope>
    <source>
        <strain>ATCC 13032 / DSM 20300 / JCM 1318 / BCRC 11384 / CCUG 27702 / LMG 3730 / NBRC 12168 / NCIMB 10025 / NRRL B-2784 / 534</strain>
    </source>
</reference>
<reference key="2">
    <citation type="journal article" date="2003" name="J. Biotechnol.">
        <title>The complete Corynebacterium glutamicum ATCC 13032 genome sequence and its impact on the production of L-aspartate-derived amino acids and vitamins.</title>
        <authorList>
            <person name="Kalinowski J."/>
            <person name="Bathe B."/>
            <person name="Bartels D."/>
            <person name="Bischoff N."/>
            <person name="Bott M."/>
            <person name="Burkovski A."/>
            <person name="Dusch N."/>
            <person name="Eggeling L."/>
            <person name="Eikmanns B.J."/>
            <person name="Gaigalat L."/>
            <person name="Goesmann A."/>
            <person name="Hartmann M."/>
            <person name="Huthmacher K."/>
            <person name="Kraemer R."/>
            <person name="Linke B."/>
            <person name="McHardy A.C."/>
            <person name="Meyer F."/>
            <person name="Moeckel B."/>
            <person name="Pfefferle W."/>
            <person name="Puehler A."/>
            <person name="Rey D.A."/>
            <person name="Rueckert C."/>
            <person name="Rupp O."/>
            <person name="Sahm H."/>
            <person name="Wendisch V.F."/>
            <person name="Wiegraebe I."/>
            <person name="Tauch A."/>
        </authorList>
    </citation>
    <scope>NUCLEOTIDE SEQUENCE [LARGE SCALE GENOMIC DNA]</scope>
    <source>
        <strain>ATCC 13032 / DSM 20300 / JCM 1318 / BCRC 11384 / CCUG 27702 / LMG 3730 / NBRC 12168 / NCIMB 10025 / NRRL B-2784 / 534</strain>
    </source>
</reference>
<sequence length="156" mass="16959">MFSSVGWGEIFLLVVVGLVVIGPERLPRLIQDARAALLAARTAIDNAKQSLDSDFGSEFDEIRKPLTQVAQYSRMSPKTAITKALFDNDSSFLDDFDPKKIMAEGTEGEAQRNKQAADNNANVVERPADGSTARPTQNDPKDGPNYSGGVSWTDII</sequence>
<evidence type="ECO:0000255" key="1">
    <source>
        <dbReference type="HAMAP-Rule" id="MF_00237"/>
    </source>
</evidence>
<evidence type="ECO:0000256" key="2">
    <source>
        <dbReference type="SAM" id="MobiDB-lite"/>
    </source>
</evidence>
<proteinExistence type="inferred from homology"/>
<gene>
    <name evidence="1" type="primary">tatB</name>
    <name type="ordered locus">Cgl1122</name>
    <name type="ordered locus">cg1273</name>
</gene>